<reference key="1">
    <citation type="journal article" date="2008" name="PLoS Genet.">
        <title>The genome of Borrelia recurrentis, the agent of deadly louse-borne relapsing fever, is a degraded subset of tick-borne Borrelia duttonii.</title>
        <authorList>
            <person name="Lescot M."/>
            <person name="Audic S."/>
            <person name="Robert C."/>
            <person name="Nguyen T.T."/>
            <person name="Blanc G."/>
            <person name="Cutler S.J."/>
            <person name="Wincker P."/>
            <person name="Couloux A."/>
            <person name="Claverie J.-M."/>
            <person name="Raoult D."/>
            <person name="Drancourt M."/>
        </authorList>
    </citation>
    <scope>NUCLEOTIDE SEQUENCE [LARGE SCALE GENOMIC DNA]</scope>
    <source>
        <strain>A1</strain>
    </source>
</reference>
<name>RS13_BORRA</name>
<protein>
    <recommendedName>
        <fullName evidence="1">Small ribosomal subunit protein uS13</fullName>
    </recommendedName>
    <alternativeName>
        <fullName evidence="3">30S ribosomal protein S13</fullName>
    </alternativeName>
</protein>
<evidence type="ECO:0000255" key="1">
    <source>
        <dbReference type="HAMAP-Rule" id="MF_01315"/>
    </source>
</evidence>
<evidence type="ECO:0000256" key="2">
    <source>
        <dbReference type="SAM" id="MobiDB-lite"/>
    </source>
</evidence>
<evidence type="ECO:0000305" key="3"/>
<dbReference type="EMBL" id="CP000993">
    <property type="protein sequence ID" value="ACH94738.1"/>
    <property type="molecule type" value="Genomic_DNA"/>
</dbReference>
<dbReference type="RefSeq" id="WP_012538253.1">
    <property type="nucleotide sequence ID" value="NZ_CP169983.1"/>
</dbReference>
<dbReference type="SMR" id="B5RPK4"/>
<dbReference type="KEGG" id="bre:BRE_506"/>
<dbReference type="HOGENOM" id="CLU_103849_1_2_12"/>
<dbReference type="Proteomes" id="UP000000612">
    <property type="component" value="Chromosome"/>
</dbReference>
<dbReference type="GO" id="GO:0005829">
    <property type="term" value="C:cytosol"/>
    <property type="evidence" value="ECO:0007669"/>
    <property type="project" value="TreeGrafter"/>
</dbReference>
<dbReference type="GO" id="GO:0015935">
    <property type="term" value="C:small ribosomal subunit"/>
    <property type="evidence" value="ECO:0007669"/>
    <property type="project" value="TreeGrafter"/>
</dbReference>
<dbReference type="GO" id="GO:0019843">
    <property type="term" value="F:rRNA binding"/>
    <property type="evidence" value="ECO:0007669"/>
    <property type="project" value="UniProtKB-UniRule"/>
</dbReference>
<dbReference type="GO" id="GO:0003735">
    <property type="term" value="F:structural constituent of ribosome"/>
    <property type="evidence" value="ECO:0007669"/>
    <property type="project" value="InterPro"/>
</dbReference>
<dbReference type="GO" id="GO:0000049">
    <property type="term" value="F:tRNA binding"/>
    <property type="evidence" value="ECO:0007669"/>
    <property type="project" value="UniProtKB-UniRule"/>
</dbReference>
<dbReference type="GO" id="GO:0006412">
    <property type="term" value="P:translation"/>
    <property type="evidence" value="ECO:0007669"/>
    <property type="project" value="UniProtKB-UniRule"/>
</dbReference>
<dbReference type="FunFam" id="1.10.8.50:FF:000001">
    <property type="entry name" value="30S ribosomal protein S13"/>
    <property type="match status" value="1"/>
</dbReference>
<dbReference type="FunFam" id="4.10.910.10:FF:000001">
    <property type="entry name" value="30S ribosomal protein S13"/>
    <property type="match status" value="1"/>
</dbReference>
<dbReference type="Gene3D" id="1.10.8.50">
    <property type="match status" value="1"/>
</dbReference>
<dbReference type="Gene3D" id="4.10.910.10">
    <property type="entry name" value="30s ribosomal protein s13, domain 2"/>
    <property type="match status" value="1"/>
</dbReference>
<dbReference type="HAMAP" id="MF_01315">
    <property type="entry name" value="Ribosomal_uS13"/>
    <property type="match status" value="1"/>
</dbReference>
<dbReference type="InterPro" id="IPR027437">
    <property type="entry name" value="Rbsml_uS13_C"/>
</dbReference>
<dbReference type="InterPro" id="IPR001892">
    <property type="entry name" value="Ribosomal_uS13"/>
</dbReference>
<dbReference type="InterPro" id="IPR010979">
    <property type="entry name" value="Ribosomal_uS13-like_H2TH"/>
</dbReference>
<dbReference type="InterPro" id="IPR019980">
    <property type="entry name" value="Ribosomal_uS13_bac-type"/>
</dbReference>
<dbReference type="InterPro" id="IPR018269">
    <property type="entry name" value="Ribosomal_uS13_CS"/>
</dbReference>
<dbReference type="NCBIfam" id="TIGR03631">
    <property type="entry name" value="uS13_bact"/>
    <property type="match status" value="1"/>
</dbReference>
<dbReference type="PANTHER" id="PTHR10871">
    <property type="entry name" value="30S RIBOSOMAL PROTEIN S13/40S RIBOSOMAL PROTEIN S18"/>
    <property type="match status" value="1"/>
</dbReference>
<dbReference type="PANTHER" id="PTHR10871:SF1">
    <property type="entry name" value="SMALL RIBOSOMAL SUBUNIT PROTEIN US13M"/>
    <property type="match status" value="1"/>
</dbReference>
<dbReference type="Pfam" id="PF00416">
    <property type="entry name" value="Ribosomal_S13"/>
    <property type="match status" value="1"/>
</dbReference>
<dbReference type="PIRSF" id="PIRSF002134">
    <property type="entry name" value="Ribosomal_S13"/>
    <property type="match status" value="1"/>
</dbReference>
<dbReference type="SUPFAM" id="SSF46946">
    <property type="entry name" value="S13-like H2TH domain"/>
    <property type="match status" value="1"/>
</dbReference>
<dbReference type="PROSITE" id="PS00646">
    <property type="entry name" value="RIBOSOMAL_S13_1"/>
    <property type="match status" value="1"/>
</dbReference>
<dbReference type="PROSITE" id="PS50159">
    <property type="entry name" value="RIBOSOMAL_S13_2"/>
    <property type="match status" value="1"/>
</dbReference>
<sequence>MARIAGIDLPNNKQLQIALTSIYGIGRSRALEICKKTGILPEKRAKDLDNEEVNKLRKIIESDYVVEGKLRSELAMSIKRLMDIACYRGLRHRKGLPLRGQRTKTNARTRKGKRKTVANKKIAAK</sequence>
<comment type="function">
    <text evidence="1">Located at the top of the head of the 30S subunit, it contacts several helices of the 16S rRNA. In the 70S ribosome it contacts the 23S rRNA (bridge B1a) and protein L5 of the 50S subunit (bridge B1b), connecting the 2 subunits; these bridges are implicated in subunit movement. Contacts the tRNAs in the A and P-sites.</text>
</comment>
<comment type="subunit">
    <text evidence="1">Part of the 30S ribosomal subunit. Forms a loose heterodimer with protein S19. Forms two bridges to the 50S subunit in the 70S ribosome.</text>
</comment>
<comment type="similarity">
    <text evidence="1">Belongs to the universal ribosomal protein uS13 family.</text>
</comment>
<organism>
    <name type="scientific">Borrelia recurrentis (strain A1)</name>
    <dbReference type="NCBI Taxonomy" id="412418"/>
    <lineage>
        <taxon>Bacteria</taxon>
        <taxon>Pseudomonadati</taxon>
        <taxon>Spirochaetota</taxon>
        <taxon>Spirochaetia</taxon>
        <taxon>Spirochaetales</taxon>
        <taxon>Borreliaceae</taxon>
        <taxon>Borrelia</taxon>
    </lineage>
</organism>
<feature type="chain" id="PRO_1000141227" description="Small ribosomal subunit protein uS13">
    <location>
        <begin position="1"/>
        <end position="125"/>
    </location>
</feature>
<feature type="region of interest" description="Disordered" evidence="2">
    <location>
        <begin position="101"/>
        <end position="125"/>
    </location>
</feature>
<keyword id="KW-0687">Ribonucleoprotein</keyword>
<keyword id="KW-0689">Ribosomal protein</keyword>
<keyword id="KW-0694">RNA-binding</keyword>
<keyword id="KW-0699">rRNA-binding</keyword>
<keyword id="KW-0820">tRNA-binding</keyword>
<gene>
    <name evidence="1" type="primary">rpsM</name>
    <name type="ordered locus">BRE_506</name>
</gene>
<accession>B5RPK4</accession>
<proteinExistence type="inferred from homology"/>